<feature type="transit peptide" description="Mitochondrion" evidence="1">
    <location>
        <begin position="1"/>
        <end position="31"/>
    </location>
</feature>
<feature type="chain" id="PRO_0000273081" description="Large ribosomal subunit protein mL51">
    <location>
        <begin position="32"/>
        <end position="128"/>
    </location>
</feature>
<reference key="1">
    <citation type="submission" date="2007-07" db="EMBL/GenBank/DDBJ databases">
        <authorList>
            <consortium name="NIH - Mammalian Gene Collection (MGC) project"/>
        </authorList>
    </citation>
    <scope>NUCLEOTIDE SEQUENCE [LARGE SCALE MRNA]</scope>
    <source>
        <strain>Hereford</strain>
        <tissue>Uterus</tissue>
    </source>
</reference>
<reference key="2">
    <citation type="journal article" date="2001" name="J. Biol. Chem.">
        <title>Proteomic analysis of the mammalian mitochondrial ribosome. Identification of protein components in the 28S small subunit.</title>
        <authorList>
            <person name="Suzuki T."/>
            <person name="Terasaki M."/>
            <person name="Takemoto-Hori C."/>
            <person name="Hanada T."/>
            <person name="Ueda T."/>
            <person name="Wada A."/>
            <person name="Watanabe K."/>
        </authorList>
    </citation>
    <scope>IDENTIFICATION BY MASS SPECTROMETRY</scope>
</reference>
<reference key="3">
    <citation type="journal article" date="2001" name="J. Biol. Chem.">
        <title>The large subunit of the mammalian mitochondrial ribosome. Analysis of the complement of ribosomal proteins present.</title>
        <authorList>
            <person name="Koc E.C."/>
            <person name="Burkhart W."/>
            <person name="Blackburn K."/>
            <person name="Moyer M.B."/>
            <person name="Schlatzer D.M."/>
            <person name="Moseley A."/>
            <person name="Spremulli L.L."/>
        </authorList>
    </citation>
    <scope>IDENTIFICATION BY MASS SPECTROMETRY</scope>
    <scope>IDENTIFICATION IN THE 39S MITOCHONDRIAL RIBOSOME</scope>
    <scope>SUBCELLULAR LOCATION</scope>
</reference>
<reference key="4">
    <citation type="journal article" date="2010" name="J. Biol. Chem.">
        <title>Properties of the C-terminal tail of human mitochondrial inner membrane protein Oxa1L and its interactions with mammalian mitochondrial ribosomes.</title>
        <authorList>
            <person name="Haque M.E."/>
            <person name="Elmore K.B."/>
            <person name="Tripathy A."/>
            <person name="Koc H."/>
            <person name="Koc E.C."/>
            <person name="Spremulli L.L."/>
        </authorList>
    </citation>
    <scope>INTERACTION WITH OXA1L</scope>
    <scope>IDENTIFICATION BY MASS SPECTROMETRY</scope>
</reference>
<gene>
    <name type="primary">MRPL51</name>
</gene>
<comment type="subunit">
    <text evidence="2 3">Component of the mitochondrial ribosome large subunit (39S) which comprises a 16S rRNA and about 50 distinct proteins. Interacts with OXA1L.</text>
</comment>
<comment type="subcellular location">
    <subcellularLocation>
        <location evidence="2">Mitochondrion</location>
    </subcellularLocation>
</comment>
<comment type="similarity">
    <text evidence="4">Belongs to the mitochondrion-specific ribosomal protein mL51 family.</text>
</comment>
<sequence>MAGSLSWVAGRRLWGLVPLACRSFFLGVPRLFHVRVTLPPPKVIDRWNQKRAMFGVYDNIGILGNFEKHPKELIKGPVWLRGWKGNELQRCIRKKRMVGNRMFIDDLHNLNKRISFLYKRFNRHGKHR</sequence>
<organism>
    <name type="scientific">Bos taurus</name>
    <name type="common">Bovine</name>
    <dbReference type="NCBI Taxonomy" id="9913"/>
    <lineage>
        <taxon>Eukaryota</taxon>
        <taxon>Metazoa</taxon>
        <taxon>Chordata</taxon>
        <taxon>Craniata</taxon>
        <taxon>Vertebrata</taxon>
        <taxon>Euteleostomi</taxon>
        <taxon>Mammalia</taxon>
        <taxon>Eutheria</taxon>
        <taxon>Laurasiatheria</taxon>
        <taxon>Artiodactyla</taxon>
        <taxon>Ruminantia</taxon>
        <taxon>Pecora</taxon>
        <taxon>Bovidae</taxon>
        <taxon>Bovinae</taxon>
        <taxon>Bos</taxon>
    </lineage>
</organism>
<protein>
    <recommendedName>
        <fullName evidence="4">Large ribosomal subunit protein mL51</fullName>
    </recommendedName>
    <alternativeName>
        <fullName>39S ribosomal protein L51, mitochondrial</fullName>
        <shortName>L51mt</shortName>
        <shortName>MRP-L51</shortName>
    </alternativeName>
</protein>
<accession>P0C2B6</accession>
<accession>A7MB58</accession>
<keyword id="KW-0496">Mitochondrion</keyword>
<keyword id="KW-1185">Reference proteome</keyword>
<keyword id="KW-0687">Ribonucleoprotein</keyword>
<keyword id="KW-0689">Ribosomal protein</keyword>
<keyword id="KW-0809">Transit peptide</keyword>
<proteinExistence type="evidence at protein level"/>
<evidence type="ECO:0000255" key="1"/>
<evidence type="ECO:0000269" key="2">
    <source>
    </source>
</evidence>
<evidence type="ECO:0000269" key="3">
    <source>
    </source>
</evidence>
<evidence type="ECO:0000305" key="4"/>
<name>RM51_BOVIN</name>
<dbReference type="EMBL" id="BC151349">
    <property type="protein sequence ID" value="AAI51350.1"/>
    <property type="molecule type" value="mRNA"/>
</dbReference>
<dbReference type="RefSeq" id="NP_001094558.1">
    <property type="nucleotide sequence ID" value="NM_001101088.1"/>
</dbReference>
<dbReference type="SMR" id="P0C2B6"/>
<dbReference type="FunCoup" id="P0C2B6">
    <property type="interactions" value="1801"/>
</dbReference>
<dbReference type="STRING" id="9913.ENSBTAP00000019602"/>
<dbReference type="PaxDb" id="9913-ENSBTAP00000019602"/>
<dbReference type="Ensembl" id="ENSBTAT00000019602.6">
    <property type="protein sequence ID" value="ENSBTAP00000019602.4"/>
    <property type="gene ID" value="ENSBTAG00000014729.6"/>
</dbReference>
<dbReference type="GeneID" id="513622"/>
<dbReference type="KEGG" id="bta:513622"/>
<dbReference type="CTD" id="51258"/>
<dbReference type="VEuPathDB" id="HostDB:ENSBTAG00000014729"/>
<dbReference type="VGNC" id="VGNC:31646">
    <property type="gene designation" value="MRPL51"/>
</dbReference>
<dbReference type="eggNOG" id="KOG4045">
    <property type="taxonomic scope" value="Eukaryota"/>
</dbReference>
<dbReference type="GeneTree" id="ENSGT00390000018821"/>
<dbReference type="HOGENOM" id="CLU_150741_0_0_1"/>
<dbReference type="InParanoid" id="P0C2B6"/>
<dbReference type="OMA" id="LIIAPCW"/>
<dbReference type="OrthoDB" id="10059330at2759"/>
<dbReference type="TreeFam" id="TF106130"/>
<dbReference type="Reactome" id="R-BTA-5389840">
    <property type="pathway name" value="Mitochondrial translation elongation"/>
</dbReference>
<dbReference type="Reactome" id="R-BTA-5419276">
    <property type="pathway name" value="Mitochondrial translation termination"/>
</dbReference>
<dbReference type="Proteomes" id="UP000009136">
    <property type="component" value="Chromosome 5"/>
</dbReference>
<dbReference type="Bgee" id="ENSBTAG00000014729">
    <property type="expression patterns" value="Expressed in tongue muscle and 107 other cell types or tissues"/>
</dbReference>
<dbReference type="GO" id="GO:0005743">
    <property type="term" value="C:mitochondrial inner membrane"/>
    <property type="evidence" value="ECO:0000304"/>
    <property type="project" value="Reactome"/>
</dbReference>
<dbReference type="GO" id="GO:0005762">
    <property type="term" value="C:mitochondrial large ribosomal subunit"/>
    <property type="evidence" value="ECO:0000314"/>
    <property type="project" value="UniProtKB"/>
</dbReference>
<dbReference type="GO" id="GO:0005761">
    <property type="term" value="C:mitochondrial ribosome"/>
    <property type="evidence" value="ECO:0007005"/>
    <property type="project" value="UniProtKB"/>
</dbReference>
<dbReference type="GO" id="GO:0003735">
    <property type="term" value="F:structural constituent of ribosome"/>
    <property type="evidence" value="ECO:0000314"/>
    <property type="project" value="UniProtKB"/>
</dbReference>
<dbReference type="GO" id="GO:0032543">
    <property type="term" value="P:mitochondrial translation"/>
    <property type="evidence" value="ECO:0007005"/>
    <property type="project" value="UniProtKB"/>
</dbReference>
<dbReference type="GO" id="GO:0006412">
    <property type="term" value="P:translation"/>
    <property type="evidence" value="ECO:0000314"/>
    <property type="project" value="UniProtKB"/>
</dbReference>
<dbReference type="InterPro" id="IPR019373">
    <property type="entry name" value="Ribosomal_mL51"/>
</dbReference>
<dbReference type="PANTHER" id="PTHR13409:SF0">
    <property type="entry name" value="LARGE RIBOSOMAL SUBUNIT PROTEIN ML51"/>
    <property type="match status" value="1"/>
</dbReference>
<dbReference type="PANTHER" id="PTHR13409">
    <property type="entry name" value="MITOCHONDRIAL 39S RIBOSOMAL PROTEIN L51"/>
    <property type="match status" value="1"/>
</dbReference>
<dbReference type="Pfam" id="PF10244">
    <property type="entry name" value="MRP-L51"/>
    <property type="match status" value="1"/>
</dbReference>